<sequence>MQESHFFAHLARMKLIQRWPLMRSISSENISEHSLQVAFVAHALAVIKNKKFGGTLNPERIALLAMYHDTSEVLTGDLPTPIKYFNPEIAKEYKKIEAAAERRLLDMLPEELRDDFRPFLISNTADPDESAIVKQADAICAYLKCLEELSAGNHEYAQAKKRLDVTLRERHSEEMAYFLQTFAPSFELTLDEIS</sequence>
<keyword id="KW-0963">Cytoplasm</keyword>
<keyword id="KW-0378">Hydrolase</keyword>
<keyword id="KW-0479">Metal-binding</keyword>
<keyword id="KW-0547">Nucleotide-binding</keyword>
<keyword id="KW-1185">Reference proteome</keyword>
<organism>
    <name type="scientific">Vibrio cholerae serotype O1 (strain ATCC 39315 / El Tor Inaba N16961)</name>
    <dbReference type="NCBI Taxonomy" id="243277"/>
    <lineage>
        <taxon>Bacteria</taxon>
        <taxon>Pseudomonadati</taxon>
        <taxon>Pseudomonadota</taxon>
        <taxon>Gammaproteobacteria</taxon>
        <taxon>Vibrionales</taxon>
        <taxon>Vibrionaceae</taxon>
        <taxon>Vibrio</taxon>
    </lineage>
</organism>
<dbReference type="EC" id="3.1.3.89" evidence="1"/>
<dbReference type="EMBL" id="AE003852">
    <property type="protein sequence ID" value="AAF95126.1"/>
    <property type="status" value="ALT_INIT"/>
    <property type="molecule type" value="Genomic_DNA"/>
</dbReference>
<dbReference type="PIR" id="A82132">
    <property type="entry name" value="A82132"/>
</dbReference>
<dbReference type="RefSeq" id="NP_231612.2">
    <property type="nucleotide sequence ID" value="NC_002505.1"/>
</dbReference>
<dbReference type="SMR" id="Q9KQM0"/>
<dbReference type="STRING" id="243277.VC_1978"/>
<dbReference type="DNASU" id="2613482"/>
<dbReference type="EnsemblBacteria" id="AAF95126">
    <property type="protein sequence ID" value="AAF95126"/>
    <property type="gene ID" value="VC_1978"/>
</dbReference>
<dbReference type="KEGG" id="vch:VC_1978"/>
<dbReference type="PATRIC" id="fig|243277.26.peg.1890"/>
<dbReference type="eggNOG" id="COG1896">
    <property type="taxonomic scope" value="Bacteria"/>
</dbReference>
<dbReference type="HOGENOM" id="CLU_084784_0_0_6"/>
<dbReference type="Proteomes" id="UP000000584">
    <property type="component" value="Chromosome 1"/>
</dbReference>
<dbReference type="GO" id="GO:0005737">
    <property type="term" value="C:cytoplasm"/>
    <property type="evidence" value="ECO:0007669"/>
    <property type="project" value="UniProtKB-SubCell"/>
</dbReference>
<dbReference type="GO" id="GO:0002953">
    <property type="term" value="F:5'-deoxynucleotidase activity"/>
    <property type="evidence" value="ECO:0000318"/>
    <property type="project" value="GO_Central"/>
</dbReference>
<dbReference type="GO" id="GO:0046872">
    <property type="term" value="F:metal ion binding"/>
    <property type="evidence" value="ECO:0007669"/>
    <property type="project" value="UniProtKB-KW"/>
</dbReference>
<dbReference type="GO" id="GO:0000166">
    <property type="term" value="F:nucleotide binding"/>
    <property type="evidence" value="ECO:0007669"/>
    <property type="project" value="UniProtKB-KW"/>
</dbReference>
<dbReference type="FunFam" id="1.10.3210.10:FF:000002">
    <property type="entry name" value="Nucleotidase YfbR"/>
    <property type="match status" value="1"/>
</dbReference>
<dbReference type="Gene3D" id="1.10.3210.10">
    <property type="entry name" value="Hypothetical protein af1432"/>
    <property type="match status" value="1"/>
</dbReference>
<dbReference type="HAMAP" id="MF_01100">
    <property type="entry name" value="5DNU"/>
    <property type="match status" value="1"/>
</dbReference>
<dbReference type="InterPro" id="IPR003607">
    <property type="entry name" value="HD/PDEase_dom"/>
</dbReference>
<dbReference type="InterPro" id="IPR006674">
    <property type="entry name" value="HD_domain"/>
</dbReference>
<dbReference type="InterPro" id="IPR022971">
    <property type="entry name" value="YfbR"/>
</dbReference>
<dbReference type="InterPro" id="IPR039356">
    <property type="entry name" value="YfbR/HDDC2"/>
</dbReference>
<dbReference type="NCBIfam" id="NF003009">
    <property type="entry name" value="PRK03826.1"/>
    <property type="match status" value="1"/>
</dbReference>
<dbReference type="PANTHER" id="PTHR11845">
    <property type="entry name" value="5'-DEOXYNUCLEOTIDASE HDDC2"/>
    <property type="match status" value="1"/>
</dbReference>
<dbReference type="PANTHER" id="PTHR11845:SF13">
    <property type="entry name" value="5'-DEOXYNUCLEOTIDASE HDDC2"/>
    <property type="match status" value="1"/>
</dbReference>
<dbReference type="Pfam" id="PF12917">
    <property type="entry name" value="YfbR-like"/>
    <property type="match status" value="1"/>
</dbReference>
<dbReference type="SMART" id="SM00471">
    <property type="entry name" value="HDc"/>
    <property type="match status" value="1"/>
</dbReference>
<dbReference type="SUPFAM" id="SSF109604">
    <property type="entry name" value="HD-domain/PDEase-like"/>
    <property type="match status" value="1"/>
</dbReference>
<dbReference type="PROSITE" id="PS51831">
    <property type="entry name" value="HD"/>
    <property type="match status" value="1"/>
</dbReference>
<protein>
    <recommendedName>
        <fullName evidence="1">5'-deoxynucleotidase VC_1978</fullName>
        <ecNumber evidence="1">3.1.3.89</ecNumber>
    </recommendedName>
    <alternativeName>
        <fullName evidence="1">5'-deoxyribonucleotidase</fullName>
    </alternativeName>
    <alternativeName>
        <fullName evidence="1">Nucleoside 5'-monophosphate phosphohydrolase</fullName>
    </alternativeName>
</protein>
<gene>
    <name type="ordered locus">VC_1978</name>
</gene>
<proteinExistence type="inferred from homology"/>
<comment type="function">
    <text evidence="1">Catalyzes the strictly specific dephosphorylation of 2'-deoxyribonucleoside 5'-monophosphates.</text>
</comment>
<comment type="catalytic activity">
    <reaction evidence="1">
        <text>a 2'-deoxyribonucleoside 5'-phosphate + H2O = a 2'-deoxyribonucleoside + phosphate</text>
        <dbReference type="Rhea" id="RHEA:36167"/>
        <dbReference type="ChEBI" id="CHEBI:15377"/>
        <dbReference type="ChEBI" id="CHEBI:18274"/>
        <dbReference type="ChEBI" id="CHEBI:43474"/>
        <dbReference type="ChEBI" id="CHEBI:65317"/>
        <dbReference type="EC" id="3.1.3.89"/>
    </reaction>
</comment>
<comment type="cofactor">
    <cofactor evidence="1">
        <name>a divalent metal cation</name>
        <dbReference type="ChEBI" id="CHEBI:60240"/>
    </cofactor>
</comment>
<comment type="subunit">
    <text evidence="1">Homodimer.</text>
</comment>
<comment type="subcellular location">
    <subcellularLocation>
        <location evidence="1">Cytoplasm</location>
    </subcellularLocation>
</comment>
<comment type="similarity">
    <text evidence="1">Belongs to the 5DNU family.</text>
</comment>
<comment type="sequence caution" evidence="3">
    <conflict type="erroneous initiation">
        <sequence resource="EMBL-CDS" id="AAF95126"/>
    </conflict>
    <text>Extended N-terminus.</text>
</comment>
<feature type="chain" id="PRO_0000095061" description="5'-deoxynucleotidase VC_1978">
    <location>
        <begin position="1"/>
        <end position="194"/>
    </location>
</feature>
<feature type="domain" description="HD" evidence="2">
    <location>
        <begin position="30"/>
        <end position="142"/>
    </location>
</feature>
<feature type="binding site" evidence="1">
    <location>
        <begin position="18"/>
        <end position="19"/>
    </location>
    <ligand>
        <name>substrate</name>
    </ligand>
</feature>
<feature type="binding site" evidence="1">
    <location>
        <position position="33"/>
    </location>
    <ligand>
        <name>a divalent metal cation</name>
        <dbReference type="ChEBI" id="CHEBI:60240"/>
    </ligand>
</feature>
<feature type="binding site" evidence="1">
    <location>
        <position position="33"/>
    </location>
    <ligand>
        <name>substrate</name>
    </ligand>
</feature>
<feature type="binding site" evidence="1">
    <location>
        <position position="68"/>
    </location>
    <ligand>
        <name>a divalent metal cation</name>
        <dbReference type="ChEBI" id="CHEBI:60240"/>
    </ligand>
</feature>
<feature type="binding site" evidence="1">
    <location>
        <position position="69"/>
    </location>
    <ligand>
        <name>a divalent metal cation</name>
        <dbReference type="ChEBI" id="CHEBI:60240"/>
    </ligand>
</feature>
<feature type="binding site" evidence="1">
    <location>
        <position position="69"/>
    </location>
    <ligand>
        <name>substrate</name>
    </ligand>
</feature>
<feature type="binding site" evidence="1">
    <location>
        <begin position="77"/>
        <end position="80"/>
    </location>
    <ligand>
        <name>substrate</name>
    </ligand>
</feature>
<feature type="binding site" evidence="1">
    <location>
        <position position="137"/>
    </location>
    <ligand>
        <name>a divalent metal cation</name>
        <dbReference type="ChEBI" id="CHEBI:60240"/>
    </ligand>
</feature>
<feature type="binding site" evidence="1">
    <location>
        <position position="137"/>
    </location>
    <ligand>
        <name>substrate</name>
    </ligand>
</feature>
<feature type="site" description="Appears to be important in orienting the phosphate for catalysis" evidence="1">
    <location>
        <position position="18"/>
    </location>
</feature>
<evidence type="ECO:0000255" key="1">
    <source>
        <dbReference type="HAMAP-Rule" id="MF_01100"/>
    </source>
</evidence>
<evidence type="ECO:0000255" key="2">
    <source>
        <dbReference type="PROSITE-ProRule" id="PRU01175"/>
    </source>
</evidence>
<evidence type="ECO:0000305" key="3"/>
<reference key="1">
    <citation type="journal article" date="2000" name="Nature">
        <title>DNA sequence of both chromosomes of the cholera pathogen Vibrio cholerae.</title>
        <authorList>
            <person name="Heidelberg J.F."/>
            <person name="Eisen J.A."/>
            <person name="Nelson W.C."/>
            <person name="Clayton R.A."/>
            <person name="Gwinn M.L."/>
            <person name="Dodson R.J."/>
            <person name="Haft D.H."/>
            <person name="Hickey E.K."/>
            <person name="Peterson J.D."/>
            <person name="Umayam L.A."/>
            <person name="Gill S.R."/>
            <person name="Nelson K.E."/>
            <person name="Read T.D."/>
            <person name="Tettelin H."/>
            <person name="Richardson D.L."/>
            <person name="Ermolaeva M.D."/>
            <person name="Vamathevan J.J."/>
            <person name="Bass S."/>
            <person name="Qin H."/>
            <person name="Dragoi I."/>
            <person name="Sellers P."/>
            <person name="McDonald L.A."/>
            <person name="Utterback T.R."/>
            <person name="Fleischmann R.D."/>
            <person name="Nierman W.C."/>
            <person name="White O."/>
            <person name="Salzberg S.L."/>
            <person name="Smith H.O."/>
            <person name="Colwell R.R."/>
            <person name="Mekalanos J.J."/>
            <person name="Venter J.C."/>
            <person name="Fraser C.M."/>
        </authorList>
    </citation>
    <scope>NUCLEOTIDE SEQUENCE [LARGE SCALE GENOMIC DNA]</scope>
    <source>
        <strain>ATCC 39315 / El Tor Inaba N16961</strain>
    </source>
</reference>
<name>5DNU_VIBCH</name>
<accession>Q9KQM0</accession>